<dbReference type="EMBL" id="CP001359">
    <property type="protein sequence ID" value="ACL66246.1"/>
    <property type="molecule type" value="Genomic_DNA"/>
</dbReference>
<dbReference type="RefSeq" id="WP_012526821.1">
    <property type="nucleotide sequence ID" value="NC_011891.1"/>
</dbReference>
<dbReference type="SMR" id="B8JEV0"/>
<dbReference type="KEGG" id="acp:A2cp1_2909"/>
<dbReference type="HOGENOM" id="CLU_160655_3_1_7"/>
<dbReference type="Proteomes" id="UP000007089">
    <property type="component" value="Chromosome"/>
</dbReference>
<dbReference type="GO" id="GO:0005829">
    <property type="term" value="C:cytosol"/>
    <property type="evidence" value="ECO:0007669"/>
    <property type="project" value="TreeGrafter"/>
</dbReference>
<dbReference type="GO" id="GO:0015935">
    <property type="term" value="C:small ribosomal subunit"/>
    <property type="evidence" value="ECO:0007669"/>
    <property type="project" value="TreeGrafter"/>
</dbReference>
<dbReference type="GO" id="GO:0070181">
    <property type="term" value="F:small ribosomal subunit rRNA binding"/>
    <property type="evidence" value="ECO:0007669"/>
    <property type="project" value="TreeGrafter"/>
</dbReference>
<dbReference type="GO" id="GO:0003735">
    <property type="term" value="F:structural constituent of ribosome"/>
    <property type="evidence" value="ECO:0007669"/>
    <property type="project" value="InterPro"/>
</dbReference>
<dbReference type="GO" id="GO:0006412">
    <property type="term" value="P:translation"/>
    <property type="evidence" value="ECO:0007669"/>
    <property type="project" value="UniProtKB-UniRule"/>
</dbReference>
<dbReference type="FunFam" id="1.20.58.110:FF:000001">
    <property type="entry name" value="30S ribosomal protein S20"/>
    <property type="match status" value="1"/>
</dbReference>
<dbReference type="Gene3D" id="1.20.58.110">
    <property type="entry name" value="Ribosomal protein S20"/>
    <property type="match status" value="1"/>
</dbReference>
<dbReference type="HAMAP" id="MF_00500">
    <property type="entry name" value="Ribosomal_bS20"/>
    <property type="match status" value="1"/>
</dbReference>
<dbReference type="InterPro" id="IPR002583">
    <property type="entry name" value="Ribosomal_bS20"/>
</dbReference>
<dbReference type="InterPro" id="IPR036510">
    <property type="entry name" value="Ribosomal_bS20_sf"/>
</dbReference>
<dbReference type="NCBIfam" id="TIGR00029">
    <property type="entry name" value="S20"/>
    <property type="match status" value="1"/>
</dbReference>
<dbReference type="PANTHER" id="PTHR33398">
    <property type="entry name" value="30S RIBOSOMAL PROTEIN S20"/>
    <property type="match status" value="1"/>
</dbReference>
<dbReference type="PANTHER" id="PTHR33398:SF1">
    <property type="entry name" value="SMALL RIBOSOMAL SUBUNIT PROTEIN BS20C"/>
    <property type="match status" value="1"/>
</dbReference>
<dbReference type="Pfam" id="PF01649">
    <property type="entry name" value="Ribosomal_S20p"/>
    <property type="match status" value="1"/>
</dbReference>
<dbReference type="SUPFAM" id="SSF46992">
    <property type="entry name" value="Ribosomal protein S20"/>
    <property type="match status" value="1"/>
</dbReference>
<proteinExistence type="inferred from homology"/>
<accession>B8JEV0</accession>
<gene>
    <name evidence="1" type="primary">rpsT</name>
    <name type="ordered locus">A2cp1_2909</name>
</gene>
<organism>
    <name type="scientific">Anaeromyxobacter dehalogenans (strain 2CP-1 / ATCC BAA-258)</name>
    <dbReference type="NCBI Taxonomy" id="455488"/>
    <lineage>
        <taxon>Bacteria</taxon>
        <taxon>Pseudomonadati</taxon>
        <taxon>Myxococcota</taxon>
        <taxon>Myxococcia</taxon>
        <taxon>Myxococcales</taxon>
        <taxon>Cystobacterineae</taxon>
        <taxon>Anaeromyxobacteraceae</taxon>
        <taxon>Anaeromyxobacter</taxon>
    </lineage>
</organism>
<keyword id="KW-0687">Ribonucleoprotein</keyword>
<keyword id="KW-0689">Ribosomal protein</keyword>
<keyword id="KW-0694">RNA-binding</keyword>
<keyword id="KW-0699">rRNA-binding</keyword>
<sequence length="91" mass="9528">MANTASAEKRNRQAQKRRARNVQVRTGVKSAVKKLREAIAKGDPAATQVALKSAEKTIGKAASKGVLHKNAASRKISRLAKAAAKPAAAAK</sequence>
<protein>
    <recommendedName>
        <fullName evidence="1">Small ribosomal subunit protein bS20</fullName>
    </recommendedName>
    <alternativeName>
        <fullName evidence="3">30S ribosomal protein S20</fullName>
    </alternativeName>
</protein>
<name>RS20_ANAD2</name>
<evidence type="ECO:0000255" key="1">
    <source>
        <dbReference type="HAMAP-Rule" id="MF_00500"/>
    </source>
</evidence>
<evidence type="ECO:0000256" key="2">
    <source>
        <dbReference type="SAM" id="MobiDB-lite"/>
    </source>
</evidence>
<evidence type="ECO:0000305" key="3"/>
<feature type="chain" id="PRO_1000135767" description="Small ribosomal subunit protein bS20">
    <location>
        <begin position="1"/>
        <end position="91"/>
    </location>
</feature>
<feature type="region of interest" description="Disordered" evidence="2">
    <location>
        <begin position="1"/>
        <end position="28"/>
    </location>
</feature>
<comment type="function">
    <text evidence="1">Binds directly to 16S ribosomal RNA.</text>
</comment>
<comment type="similarity">
    <text evidence="1">Belongs to the bacterial ribosomal protein bS20 family.</text>
</comment>
<reference key="1">
    <citation type="submission" date="2009-01" db="EMBL/GenBank/DDBJ databases">
        <title>Complete sequence of Anaeromyxobacter dehalogenans 2CP-1.</title>
        <authorList>
            <person name="Lucas S."/>
            <person name="Copeland A."/>
            <person name="Lapidus A."/>
            <person name="Glavina del Rio T."/>
            <person name="Dalin E."/>
            <person name="Tice H."/>
            <person name="Bruce D."/>
            <person name="Goodwin L."/>
            <person name="Pitluck S."/>
            <person name="Saunders E."/>
            <person name="Brettin T."/>
            <person name="Detter J.C."/>
            <person name="Han C."/>
            <person name="Larimer F."/>
            <person name="Land M."/>
            <person name="Hauser L."/>
            <person name="Kyrpides N."/>
            <person name="Ovchinnikova G."/>
            <person name="Beliaev A.S."/>
            <person name="Richardson P."/>
        </authorList>
    </citation>
    <scope>NUCLEOTIDE SEQUENCE [LARGE SCALE GENOMIC DNA]</scope>
    <source>
        <strain>2CP-1 / ATCC BAA-258</strain>
    </source>
</reference>